<comment type="catalytic activity">
    <reaction evidence="1">
        <text>tRNA(Lys) + L-lysine + ATP = L-lysyl-tRNA(Lys) + AMP + diphosphate</text>
        <dbReference type="Rhea" id="RHEA:20792"/>
        <dbReference type="Rhea" id="RHEA-COMP:9696"/>
        <dbReference type="Rhea" id="RHEA-COMP:9697"/>
        <dbReference type="ChEBI" id="CHEBI:30616"/>
        <dbReference type="ChEBI" id="CHEBI:32551"/>
        <dbReference type="ChEBI" id="CHEBI:33019"/>
        <dbReference type="ChEBI" id="CHEBI:78442"/>
        <dbReference type="ChEBI" id="CHEBI:78529"/>
        <dbReference type="ChEBI" id="CHEBI:456215"/>
        <dbReference type="EC" id="6.1.1.6"/>
    </reaction>
</comment>
<comment type="subcellular location">
    <subcellularLocation>
        <location evidence="1">Cytoplasm</location>
    </subcellularLocation>
</comment>
<comment type="similarity">
    <text evidence="1">Belongs to the class-I aminoacyl-tRNA synthetase family.</text>
</comment>
<name>SYK_RICM5</name>
<sequence>MSEIWEDAIKSNAWPFVEAKKILDSLNGKIPEKGYVLFETGYGPSGLPHIGTFGENARMVMVQKAFEQLSDIPTKLICFSDDMDGLRKVPSNIPNPEMVAQYMDMPLTSIPDTFGECESYGHYMNAKLRSFLDKFGFEYEFYSSTNCYKAGMFDEMLIMVLEKYDEIMELMLPTFREERKATYSPCMPICPKTGKVLQVPIEKWDAKAGTVTYKDEAGNYIEVPVTGGHCKLQWKPDFGMRWAALKVDYEMYGKDHLANARLYSEICRILGGKPPVQLCYELFLDENGEKISKSKGNSISVDDWLKCAPVESMALFMYQNPTRAKRLFFDVIPKNVDKYITFNQKYHLEEDRAKRFANPVYHIHHGNVPQIETFGITYSLLLNLTSVCNPSDKSVLWGFISKYEPKATPNTSPYLDHLAEFAIRYYNDFIKAHKSYLSPSEKHKVILQDILDMLSDIADQTEAEAIQKAIYDIGMKAGYENLRDYFKDLYQILLGQNEGPRLGTFIKLYGVQEMKKLVEGQL</sequence>
<keyword id="KW-0030">Aminoacyl-tRNA synthetase</keyword>
<keyword id="KW-0067">ATP-binding</keyword>
<keyword id="KW-0963">Cytoplasm</keyword>
<keyword id="KW-0436">Ligase</keyword>
<keyword id="KW-0547">Nucleotide-binding</keyword>
<keyword id="KW-0648">Protein biosynthesis</keyword>
<protein>
    <recommendedName>
        <fullName evidence="1">Lysine--tRNA ligase</fullName>
        <ecNumber evidence="1">6.1.1.6</ecNumber>
    </recommendedName>
    <alternativeName>
        <fullName evidence="1">Lysyl-tRNA synthetase</fullName>
        <shortName evidence="1">LysRS</shortName>
    </alternativeName>
</protein>
<reference key="1">
    <citation type="journal article" date="2007" name="Genome Res.">
        <title>Lateral gene transfer between obligate intracellular bacteria: evidence from the Rickettsia massiliae genome.</title>
        <authorList>
            <person name="Blanc G."/>
            <person name="Ogata H."/>
            <person name="Robert C."/>
            <person name="Audic S."/>
            <person name="Claverie J.-M."/>
            <person name="Raoult D."/>
        </authorList>
    </citation>
    <scope>NUCLEOTIDE SEQUENCE [LARGE SCALE GENOMIC DNA]</scope>
    <source>
        <strain>Mtu5</strain>
    </source>
</reference>
<gene>
    <name evidence="1" type="primary">lysS</name>
    <name type="ordered locus">RMA_0525</name>
</gene>
<evidence type="ECO:0000255" key="1">
    <source>
        <dbReference type="HAMAP-Rule" id="MF_00177"/>
    </source>
</evidence>
<dbReference type="EC" id="6.1.1.6" evidence="1"/>
<dbReference type="EMBL" id="CP000683">
    <property type="protein sequence ID" value="ABV84724.1"/>
    <property type="molecule type" value="Genomic_DNA"/>
</dbReference>
<dbReference type="RefSeq" id="WP_012152699.1">
    <property type="nucleotide sequence ID" value="NC_009900.1"/>
</dbReference>
<dbReference type="SMR" id="A8F1D8"/>
<dbReference type="KEGG" id="rms:RMA_0525"/>
<dbReference type="HOGENOM" id="CLU_025562_2_0_5"/>
<dbReference type="Proteomes" id="UP000001311">
    <property type="component" value="Chromosome"/>
</dbReference>
<dbReference type="GO" id="GO:0005737">
    <property type="term" value="C:cytoplasm"/>
    <property type="evidence" value="ECO:0007669"/>
    <property type="project" value="UniProtKB-SubCell"/>
</dbReference>
<dbReference type="GO" id="GO:0005524">
    <property type="term" value="F:ATP binding"/>
    <property type="evidence" value="ECO:0007669"/>
    <property type="project" value="UniProtKB-UniRule"/>
</dbReference>
<dbReference type="GO" id="GO:0004824">
    <property type="term" value="F:lysine-tRNA ligase activity"/>
    <property type="evidence" value="ECO:0007669"/>
    <property type="project" value="UniProtKB-UniRule"/>
</dbReference>
<dbReference type="GO" id="GO:0000049">
    <property type="term" value="F:tRNA binding"/>
    <property type="evidence" value="ECO:0007669"/>
    <property type="project" value="InterPro"/>
</dbReference>
<dbReference type="GO" id="GO:0006430">
    <property type="term" value="P:lysyl-tRNA aminoacylation"/>
    <property type="evidence" value="ECO:0007669"/>
    <property type="project" value="UniProtKB-UniRule"/>
</dbReference>
<dbReference type="Gene3D" id="1.10.10.350">
    <property type="match status" value="1"/>
</dbReference>
<dbReference type="Gene3D" id="3.40.50.620">
    <property type="entry name" value="HUPs"/>
    <property type="match status" value="2"/>
</dbReference>
<dbReference type="HAMAP" id="MF_00177">
    <property type="entry name" value="Lys_tRNA_synth_class1"/>
    <property type="match status" value="1"/>
</dbReference>
<dbReference type="InterPro" id="IPR020751">
    <property type="entry name" value="aa-tRNA-synth_I_codon-bd_sub2"/>
</dbReference>
<dbReference type="InterPro" id="IPR001412">
    <property type="entry name" value="aa-tRNA-synth_I_CS"/>
</dbReference>
<dbReference type="InterPro" id="IPR008925">
    <property type="entry name" value="aa_tRNA-synth_I_cd-bd_sf"/>
</dbReference>
<dbReference type="InterPro" id="IPR002904">
    <property type="entry name" value="Lys-tRNA-ligase"/>
</dbReference>
<dbReference type="InterPro" id="IPR014729">
    <property type="entry name" value="Rossmann-like_a/b/a_fold"/>
</dbReference>
<dbReference type="NCBIfam" id="TIGR00467">
    <property type="entry name" value="lysS_arch"/>
    <property type="match status" value="1"/>
</dbReference>
<dbReference type="NCBIfam" id="NF001968">
    <property type="entry name" value="PRK00750.1-2"/>
    <property type="match status" value="1"/>
</dbReference>
<dbReference type="PANTHER" id="PTHR37940">
    <property type="entry name" value="LYSINE--TRNA LIGASE"/>
    <property type="match status" value="1"/>
</dbReference>
<dbReference type="PANTHER" id="PTHR37940:SF1">
    <property type="entry name" value="LYSINE--TRNA LIGASE"/>
    <property type="match status" value="1"/>
</dbReference>
<dbReference type="Pfam" id="PF01921">
    <property type="entry name" value="tRNA-synt_1f"/>
    <property type="match status" value="1"/>
</dbReference>
<dbReference type="SUPFAM" id="SSF48163">
    <property type="entry name" value="An anticodon-binding domain of class I aminoacyl-tRNA synthetases"/>
    <property type="match status" value="1"/>
</dbReference>
<dbReference type="SUPFAM" id="SSF52374">
    <property type="entry name" value="Nucleotidylyl transferase"/>
    <property type="match status" value="1"/>
</dbReference>
<dbReference type="PROSITE" id="PS00178">
    <property type="entry name" value="AA_TRNA_LIGASE_I"/>
    <property type="match status" value="1"/>
</dbReference>
<accession>A8F1D8</accession>
<proteinExistence type="inferred from homology"/>
<organism>
    <name type="scientific">Rickettsia massiliae (strain Mtu5)</name>
    <dbReference type="NCBI Taxonomy" id="416276"/>
    <lineage>
        <taxon>Bacteria</taxon>
        <taxon>Pseudomonadati</taxon>
        <taxon>Pseudomonadota</taxon>
        <taxon>Alphaproteobacteria</taxon>
        <taxon>Rickettsiales</taxon>
        <taxon>Rickettsiaceae</taxon>
        <taxon>Rickettsieae</taxon>
        <taxon>Rickettsia</taxon>
        <taxon>spotted fever group</taxon>
    </lineage>
</organism>
<feature type="chain" id="PRO_1000058360" description="Lysine--tRNA ligase">
    <location>
        <begin position="1"/>
        <end position="522"/>
    </location>
</feature>
<feature type="short sequence motif" description="'HIGH' region">
    <location>
        <begin position="44"/>
        <end position="52"/>
    </location>
</feature>
<feature type="short sequence motif" description="'KMSKS' region">
    <location>
        <begin position="290"/>
        <end position="294"/>
    </location>
</feature>
<feature type="binding site" evidence="1">
    <location>
        <position position="293"/>
    </location>
    <ligand>
        <name>ATP</name>
        <dbReference type="ChEBI" id="CHEBI:30616"/>
    </ligand>
</feature>